<sequence length="225" mass="25263">MSHTEVKLKIPFGNKLLDAVCLVPNKNIAYGIILTHGASGDMNLPHLMSLASHLASHGFFCLRFTCKGLNIVHRIKAYKAVLNYLKTSGEYKLAGVFLGGRSMGSRAAASVMCHTEPDDADDFVRGLICISYPLHHPKQQHKLRDEDLFRIKDPVLFVSGSADEMCEKNLLEKVAQKMQAPSKIHWIEKANHSMAVKGRSTNDVFKEINTQILFWIQEITEMDKK</sequence>
<name>TEX30_MOUSE</name>
<protein>
    <recommendedName>
        <fullName>Testis-expressed protein 30</fullName>
    </recommendedName>
</protein>
<proteinExistence type="evidence at protein level"/>
<evidence type="ECO:0000305" key="1"/>
<comment type="sequence caution" evidence="1">
    <conflict type="erroneous initiation">
        <sequence resource="EMBL-CDS" id="AAI16882"/>
    </conflict>
    <text>Truncated N-terminus.</text>
</comment>
<comment type="sequence caution" evidence="1">
    <conflict type="erroneous initiation">
        <sequence resource="EMBL-CDS" id="AAI19033"/>
    </conflict>
    <text>Truncated N-terminus.</text>
</comment>
<gene>
    <name type="primary">Tex30</name>
</gene>
<accession>Q3TUU5</accession>
<accession>Q4KKZ6</accession>
<accession>Q9D9T9</accession>
<organism>
    <name type="scientific">Mus musculus</name>
    <name type="common">Mouse</name>
    <dbReference type="NCBI Taxonomy" id="10090"/>
    <lineage>
        <taxon>Eukaryota</taxon>
        <taxon>Metazoa</taxon>
        <taxon>Chordata</taxon>
        <taxon>Craniata</taxon>
        <taxon>Vertebrata</taxon>
        <taxon>Euteleostomi</taxon>
        <taxon>Mammalia</taxon>
        <taxon>Eutheria</taxon>
        <taxon>Euarchontoglires</taxon>
        <taxon>Glires</taxon>
        <taxon>Rodentia</taxon>
        <taxon>Myomorpha</taxon>
        <taxon>Muroidea</taxon>
        <taxon>Muridae</taxon>
        <taxon>Murinae</taxon>
        <taxon>Mus</taxon>
        <taxon>Mus</taxon>
    </lineage>
</organism>
<reference key="1">
    <citation type="journal article" date="2005" name="Science">
        <title>The transcriptional landscape of the mammalian genome.</title>
        <authorList>
            <person name="Carninci P."/>
            <person name="Kasukawa T."/>
            <person name="Katayama S."/>
            <person name="Gough J."/>
            <person name="Frith M.C."/>
            <person name="Maeda N."/>
            <person name="Oyama R."/>
            <person name="Ravasi T."/>
            <person name="Lenhard B."/>
            <person name="Wells C."/>
            <person name="Kodzius R."/>
            <person name="Shimokawa K."/>
            <person name="Bajic V.B."/>
            <person name="Brenner S.E."/>
            <person name="Batalov S."/>
            <person name="Forrest A.R."/>
            <person name="Zavolan M."/>
            <person name="Davis M.J."/>
            <person name="Wilming L.G."/>
            <person name="Aidinis V."/>
            <person name="Allen J.E."/>
            <person name="Ambesi-Impiombato A."/>
            <person name="Apweiler R."/>
            <person name="Aturaliya R.N."/>
            <person name="Bailey T.L."/>
            <person name="Bansal M."/>
            <person name="Baxter L."/>
            <person name="Beisel K.W."/>
            <person name="Bersano T."/>
            <person name="Bono H."/>
            <person name="Chalk A.M."/>
            <person name="Chiu K.P."/>
            <person name="Choudhary V."/>
            <person name="Christoffels A."/>
            <person name="Clutterbuck D.R."/>
            <person name="Crowe M.L."/>
            <person name="Dalla E."/>
            <person name="Dalrymple B.P."/>
            <person name="de Bono B."/>
            <person name="Della Gatta G."/>
            <person name="di Bernardo D."/>
            <person name="Down T."/>
            <person name="Engstrom P."/>
            <person name="Fagiolini M."/>
            <person name="Faulkner G."/>
            <person name="Fletcher C.F."/>
            <person name="Fukushima T."/>
            <person name="Furuno M."/>
            <person name="Futaki S."/>
            <person name="Gariboldi M."/>
            <person name="Georgii-Hemming P."/>
            <person name="Gingeras T.R."/>
            <person name="Gojobori T."/>
            <person name="Green R.E."/>
            <person name="Gustincich S."/>
            <person name="Harbers M."/>
            <person name="Hayashi Y."/>
            <person name="Hensch T.K."/>
            <person name="Hirokawa N."/>
            <person name="Hill D."/>
            <person name="Huminiecki L."/>
            <person name="Iacono M."/>
            <person name="Ikeo K."/>
            <person name="Iwama A."/>
            <person name="Ishikawa T."/>
            <person name="Jakt M."/>
            <person name="Kanapin A."/>
            <person name="Katoh M."/>
            <person name="Kawasawa Y."/>
            <person name="Kelso J."/>
            <person name="Kitamura H."/>
            <person name="Kitano H."/>
            <person name="Kollias G."/>
            <person name="Krishnan S.P."/>
            <person name="Kruger A."/>
            <person name="Kummerfeld S.K."/>
            <person name="Kurochkin I.V."/>
            <person name="Lareau L.F."/>
            <person name="Lazarevic D."/>
            <person name="Lipovich L."/>
            <person name="Liu J."/>
            <person name="Liuni S."/>
            <person name="McWilliam S."/>
            <person name="Madan Babu M."/>
            <person name="Madera M."/>
            <person name="Marchionni L."/>
            <person name="Matsuda H."/>
            <person name="Matsuzawa S."/>
            <person name="Miki H."/>
            <person name="Mignone F."/>
            <person name="Miyake S."/>
            <person name="Morris K."/>
            <person name="Mottagui-Tabar S."/>
            <person name="Mulder N."/>
            <person name="Nakano N."/>
            <person name="Nakauchi H."/>
            <person name="Ng P."/>
            <person name="Nilsson R."/>
            <person name="Nishiguchi S."/>
            <person name="Nishikawa S."/>
            <person name="Nori F."/>
            <person name="Ohara O."/>
            <person name="Okazaki Y."/>
            <person name="Orlando V."/>
            <person name="Pang K.C."/>
            <person name="Pavan W.J."/>
            <person name="Pavesi G."/>
            <person name="Pesole G."/>
            <person name="Petrovsky N."/>
            <person name="Piazza S."/>
            <person name="Reed J."/>
            <person name="Reid J.F."/>
            <person name="Ring B.Z."/>
            <person name="Ringwald M."/>
            <person name="Rost B."/>
            <person name="Ruan Y."/>
            <person name="Salzberg S.L."/>
            <person name="Sandelin A."/>
            <person name="Schneider C."/>
            <person name="Schoenbach C."/>
            <person name="Sekiguchi K."/>
            <person name="Semple C.A."/>
            <person name="Seno S."/>
            <person name="Sessa L."/>
            <person name="Sheng Y."/>
            <person name="Shibata Y."/>
            <person name="Shimada H."/>
            <person name="Shimada K."/>
            <person name="Silva D."/>
            <person name="Sinclair B."/>
            <person name="Sperling S."/>
            <person name="Stupka E."/>
            <person name="Sugiura K."/>
            <person name="Sultana R."/>
            <person name="Takenaka Y."/>
            <person name="Taki K."/>
            <person name="Tammoja K."/>
            <person name="Tan S.L."/>
            <person name="Tang S."/>
            <person name="Taylor M.S."/>
            <person name="Tegner J."/>
            <person name="Teichmann S.A."/>
            <person name="Ueda H.R."/>
            <person name="van Nimwegen E."/>
            <person name="Verardo R."/>
            <person name="Wei C.L."/>
            <person name="Yagi K."/>
            <person name="Yamanishi H."/>
            <person name="Zabarovsky E."/>
            <person name="Zhu S."/>
            <person name="Zimmer A."/>
            <person name="Hide W."/>
            <person name="Bult C."/>
            <person name="Grimmond S.M."/>
            <person name="Teasdale R.D."/>
            <person name="Liu E.T."/>
            <person name="Brusic V."/>
            <person name="Quackenbush J."/>
            <person name="Wahlestedt C."/>
            <person name="Mattick J.S."/>
            <person name="Hume D.A."/>
            <person name="Kai C."/>
            <person name="Sasaki D."/>
            <person name="Tomaru Y."/>
            <person name="Fukuda S."/>
            <person name="Kanamori-Katayama M."/>
            <person name="Suzuki M."/>
            <person name="Aoki J."/>
            <person name="Arakawa T."/>
            <person name="Iida J."/>
            <person name="Imamura K."/>
            <person name="Itoh M."/>
            <person name="Kato T."/>
            <person name="Kawaji H."/>
            <person name="Kawagashira N."/>
            <person name="Kawashima T."/>
            <person name="Kojima M."/>
            <person name="Kondo S."/>
            <person name="Konno H."/>
            <person name="Nakano K."/>
            <person name="Ninomiya N."/>
            <person name="Nishio T."/>
            <person name="Okada M."/>
            <person name="Plessy C."/>
            <person name="Shibata K."/>
            <person name="Shiraki T."/>
            <person name="Suzuki S."/>
            <person name="Tagami M."/>
            <person name="Waki K."/>
            <person name="Watahiki A."/>
            <person name="Okamura-Oho Y."/>
            <person name="Suzuki H."/>
            <person name="Kawai J."/>
            <person name="Hayashizaki Y."/>
        </authorList>
    </citation>
    <scope>NUCLEOTIDE SEQUENCE [LARGE SCALE MRNA]</scope>
    <source>
        <strain>C57BL/6J</strain>
        <tissue>Embryonic stem cell</tissue>
        <tissue>Testis</tissue>
    </source>
</reference>
<reference key="2">
    <citation type="journal article" date="2004" name="Genome Res.">
        <title>The status, quality, and expansion of the NIH full-length cDNA project: the Mammalian Gene Collection (MGC).</title>
        <authorList>
            <consortium name="The MGC Project Team"/>
        </authorList>
    </citation>
    <scope>NUCLEOTIDE SEQUENCE [LARGE SCALE MRNA]</scope>
    <source>
        <tissue>Brain</tissue>
        <tissue>Testis</tissue>
    </source>
</reference>
<reference key="3">
    <citation type="journal article" date="2010" name="Cell">
        <title>A tissue-specific atlas of mouse protein phosphorylation and expression.</title>
        <authorList>
            <person name="Huttlin E.L."/>
            <person name="Jedrychowski M.P."/>
            <person name="Elias J.E."/>
            <person name="Goswami T."/>
            <person name="Rad R."/>
            <person name="Beausoleil S.A."/>
            <person name="Villen J."/>
            <person name="Haas W."/>
            <person name="Sowa M.E."/>
            <person name="Gygi S.P."/>
        </authorList>
    </citation>
    <scope>IDENTIFICATION BY MASS SPECTROMETRY [LARGE SCALE ANALYSIS]</scope>
    <source>
        <tissue>Testis</tissue>
    </source>
</reference>
<feature type="chain" id="PRO_0000274313" description="Testis-expressed protein 30">
    <location>
        <begin position="1"/>
        <end position="225"/>
    </location>
</feature>
<feature type="sequence conflict" description="In Ref. 1; BAB24612." evidence="1" ref="1">
    <original>H</original>
    <variation>N</variation>
    <location>
        <position position="57"/>
    </location>
</feature>
<keyword id="KW-1185">Reference proteome</keyword>
<dbReference type="EMBL" id="AK006487">
    <property type="protein sequence ID" value="BAB24612.1"/>
    <property type="molecule type" value="mRNA"/>
</dbReference>
<dbReference type="EMBL" id="AK160565">
    <property type="protein sequence ID" value="BAE35876.1"/>
    <property type="molecule type" value="mRNA"/>
</dbReference>
<dbReference type="EMBL" id="BC099557">
    <property type="protein sequence ID" value="AAH99557.2"/>
    <property type="molecule type" value="mRNA"/>
</dbReference>
<dbReference type="EMBL" id="BC116881">
    <property type="protein sequence ID" value="AAI16882.1"/>
    <property type="status" value="ALT_INIT"/>
    <property type="molecule type" value="mRNA"/>
</dbReference>
<dbReference type="EMBL" id="BC119032">
    <property type="protein sequence ID" value="AAI19033.1"/>
    <property type="status" value="ALT_INIT"/>
    <property type="molecule type" value="mRNA"/>
</dbReference>
<dbReference type="CCDS" id="CCDS48249.1"/>
<dbReference type="RefSeq" id="NP_001343225.1">
    <property type="nucleotide sequence ID" value="NM_001356296.1"/>
</dbReference>
<dbReference type="RefSeq" id="NP_001343226.1">
    <property type="nucleotide sequence ID" value="NM_001356297.1"/>
</dbReference>
<dbReference type="RefSeq" id="NP_083644.1">
    <property type="nucleotide sequence ID" value="NM_029368.2"/>
</dbReference>
<dbReference type="RefSeq" id="XP_006496377.1">
    <property type="nucleotide sequence ID" value="XM_006496314.3"/>
</dbReference>
<dbReference type="RefSeq" id="XP_006496378.1">
    <property type="nucleotide sequence ID" value="XM_006496315.5"/>
</dbReference>
<dbReference type="RefSeq" id="XP_011236917.1">
    <property type="nucleotide sequence ID" value="XM_011238615.2"/>
</dbReference>
<dbReference type="RefSeq" id="XP_011236918.1">
    <property type="nucleotide sequence ID" value="XM_011238616.2"/>
</dbReference>
<dbReference type="RefSeq" id="XP_036010039.1">
    <property type="nucleotide sequence ID" value="XM_036154146.1"/>
</dbReference>
<dbReference type="SMR" id="Q3TUU5"/>
<dbReference type="BioGRID" id="217624">
    <property type="interactions" value="2"/>
</dbReference>
<dbReference type="FunCoup" id="Q3TUU5">
    <property type="interactions" value="598"/>
</dbReference>
<dbReference type="STRING" id="10090.ENSMUSP00000114624"/>
<dbReference type="ESTHER" id="mouse-Tex30">
    <property type="family name" value="NLS3-Tex30"/>
</dbReference>
<dbReference type="MEROPS" id="S09.027"/>
<dbReference type="iPTMnet" id="Q3TUU5"/>
<dbReference type="PhosphoSitePlus" id="Q3TUU5"/>
<dbReference type="SwissPalm" id="Q3TUU5"/>
<dbReference type="PaxDb" id="10090-ENSMUSP00000027215"/>
<dbReference type="PeptideAtlas" id="Q3TUU5"/>
<dbReference type="ProteomicsDB" id="259007"/>
<dbReference type="Pumba" id="Q3TUU5"/>
<dbReference type="Antibodypedia" id="25333">
    <property type="antibodies" value="24 antibodies from 9 providers"/>
</dbReference>
<dbReference type="Ensembl" id="ENSMUST00000027215.12">
    <property type="protein sequence ID" value="ENSMUSP00000027215.6"/>
    <property type="gene ID" value="ENSMUSG00000026049.12"/>
</dbReference>
<dbReference type="Ensembl" id="ENSMUST00000128190.8">
    <property type="protein sequence ID" value="ENSMUSP00000117565.2"/>
    <property type="gene ID" value="ENSMUSG00000026049.12"/>
</dbReference>
<dbReference type="Ensembl" id="ENSMUST00000133677.8">
    <property type="protein sequence ID" value="ENSMUSP00000115068.2"/>
    <property type="gene ID" value="ENSMUSG00000026049.12"/>
</dbReference>
<dbReference type="Ensembl" id="ENSMUST00000147571.8">
    <property type="protein sequence ID" value="ENSMUSP00000114624.2"/>
    <property type="gene ID" value="ENSMUSG00000026049.12"/>
</dbReference>
<dbReference type="Ensembl" id="ENSMUST00000150911.8">
    <property type="protein sequence ID" value="ENSMUSP00000120928.2"/>
    <property type="gene ID" value="ENSMUSG00000026049.12"/>
</dbReference>
<dbReference type="Ensembl" id="ENSMUST00000152239.8">
    <property type="protein sequence ID" value="ENSMUSP00000114991.2"/>
    <property type="gene ID" value="ENSMUSG00000026049.12"/>
</dbReference>
<dbReference type="Ensembl" id="ENSMUST00000156392.8">
    <property type="protein sequence ID" value="ENSMUSP00000121035.2"/>
    <property type="gene ID" value="ENSMUSG00000026049.12"/>
</dbReference>
<dbReference type="GeneID" id="75623"/>
<dbReference type="KEGG" id="mmu:75623"/>
<dbReference type="UCSC" id="uc007avx.2">
    <property type="organism name" value="mouse"/>
</dbReference>
<dbReference type="AGR" id="MGI:1922873"/>
<dbReference type="CTD" id="93081"/>
<dbReference type="MGI" id="MGI:1922873">
    <property type="gene designation" value="Tex30"/>
</dbReference>
<dbReference type="VEuPathDB" id="HostDB:ENSMUSG00000026049"/>
<dbReference type="eggNOG" id="KOG3253">
    <property type="taxonomic scope" value="Eukaryota"/>
</dbReference>
<dbReference type="GeneTree" id="ENSGT00940000162655"/>
<dbReference type="HOGENOM" id="CLU_072792_2_0_1"/>
<dbReference type="InParanoid" id="Q3TUU5"/>
<dbReference type="OMA" id="EVFWLQG"/>
<dbReference type="OrthoDB" id="6415022at2759"/>
<dbReference type="PhylomeDB" id="Q3TUU5"/>
<dbReference type="TreeFam" id="TF332335"/>
<dbReference type="BioGRID-ORCS" id="75623">
    <property type="hits" value="3 hits in 74 CRISPR screens"/>
</dbReference>
<dbReference type="ChiTaRS" id="Tex30">
    <property type="organism name" value="mouse"/>
</dbReference>
<dbReference type="PRO" id="PR:Q3TUU5"/>
<dbReference type="Proteomes" id="UP000000589">
    <property type="component" value="Chromosome 1"/>
</dbReference>
<dbReference type="RNAct" id="Q3TUU5">
    <property type="molecule type" value="protein"/>
</dbReference>
<dbReference type="Bgee" id="ENSMUSG00000026049">
    <property type="expression patterns" value="Expressed in seminiferous tubule of testis and 234 other cell types or tissues"/>
</dbReference>
<dbReference type="ExpressionAtlas" id="Q3TUU5">
    <property type="expression patterns" value="baseline and differential"/>
</dbReference>
<dbReference type="Gene3D" id="3.40.50.1820">
    <property type="entry name" value="alpha/beta hydrolase"/>
    <property type="match status" value="1"/>
</dbReference>
<dbReference type="InterPro" id="IPR029058">
    <property type="entry name" value="AB_hydrolase_fold"/>
</dbReference>
<dbReference type="InterPro" id="IPR046879">
    <property type="entry name" value="KANL3/Tex30_Abhydrolase"/>
</dbReference>
<dbReference type="InterPro" id="IPR026555">
    <property type="entry name" value="NSL3/Tex30"/>
</dbReference>
<dbReference type="PANTHER" id="PTHR13136">
    <property type="entry name" value="TESTIS DEVELOPMENT PROTEIN PRTD"/>
    <property type="match status" value="1"/>
</dbReference>
<dbReference type="PANTHER" id="PTHR13136:SF11">
    <property type="entry name" value="TESTIS-EXPRESSED PROTEIN 30"/>
    <property type="match status" value="1"/>
</dbReference>
<dbReference type="Pfam" id="PF20408">
    <property type="entry name" value="Abhydrolase_11"/>
    <property type="match status" value="1"/>
</dbReference>
<dbReference type="SUPFAM" id="SSF53474">
    <property type="entry name" value="alpha/beta-Hydrolases"/>
    <property type="match status" value="1"/>
</dbReference>